<name>EBS1_EREGS</name>
<dbReference type="EMBL" id="AE016820">
    <property type="protein sequence ID" value="AAS54391.1"/>
    <property type="molecule type" value="Genomic_DNA"/>
</dbReference>
<dbReference type="RefSeq" id="NP_986567.1">
    <property type="nucleotide sequence ID" value="NM_211629.1"/>
</dbReference>
<dbReference type="SMR" id="Q751B2"/>
<dbReference type="FunCoup" id="Q751B2">
    <property type="interactions" value="71"/>
</dbReference>
<dbReference type="STRING" id="284811.Q751B2"/>
<dbReference type="EnsemblFungi" id="AAS54391">
    <property type="protein sequence ID" value="AAS54391"/>
    <property type="gene ID" value="AGOS_AGL100W"/>
</dbReference>
<dbReference type="GeneID" id="4622866"/>
<dbReference type="KEGG" id="ago:AGOS_AGL100W"/>
<dbReference type="eggNOG" id="KOG2162">
    <property type="taxonomic scope" value="Eukaryota"/>
</dbReference>
<dbReference type="HOGENOM" id="CLU_010068_0_0_1"/>
<dbReference type="InParanoid" id="Q751B2"/>
<dbReference type="OMA" id="HYPIFKW"/>
<dbReference type="OrthoDB" id="69928at2759"/>
<dbReference type="Proteomes" id="UP000000591">
    <property type="component" value="Chromosome VII"/>
</dbReference>
<dbReference type="GO" id="GO:0000781">
    <property type="term" value="C:chromosome, telomeric region"/>
    <property type="evidence" value="ECO:0007669"/>
    <property type="project" value="UniProtKB-SubCell"/>
</dbReference>
<dbReference type="GO" id="GO:0005697">
    <property type="term" value="C:telomerase holoenzyme complex"/>
    <property type="evidence" value="ECO:0000318"/>
    <property type="project" value="GO_Central"/>
</dbReference>
<dbReference type="GO" id="GO:0070034">
    <property type="term" value="F:telomerase RNA binding"/>
    <property type="evidence" value="ECO:0000318"/>
    <property type="project" value="GO_Central"/>
</dbReference>
<dbReference type="GO" id="GO:0042162">
    <property type="term" value="F:telomeric DNA binding"/>
    <property type="evidence" value="ECO:0000318"/>
    <property type="project" value="GO_Central"/>
</dbReference>
<dbReference type="GO" id="GO:0000184">
    <property type="term" value="P:nuclear-transcribed mRNA catabolic process, nonsense-mediated decay"/>
    <property type="evidence" value="ECO:0000318"/>
    <property type="project" value="GO_Central"/>
</dbReference>
<dbReference type="Gene3D" id="1.25.40.10">
    <property type="entry name" value="Tetratricopeptide repeat domain"/>
    <property type="match status" value="1"/>
</dbReference>
<dbReference type="InterPro" id="IPR018834">
    <property type="entry name" value="DNA/RNA-bd_Est1-type"/>
</dbReference>
<dbReference type="InterPro" id="IPR019458">
    <property type="entry name" value="Est1-like_N"/>
</dbReference>
<dbReference type="InterPro" id="IPR045153">
    <property type="entry name" value="Est1/Ebs1-like"/>
</dbReference>
<dbReference type="InterPro" id="IPR011990">
    <property type="entry name" value="TPR-like_helical_dom_sf"/>
</dbReference>
<dbReference type="PANTHER" id="PTHR15696:SF37">
    <property type="entry name" value="NONSENSE-MEDIATED MRNA DECAY FACTOR EBS1-RELATED"/>
    <property type="match status" value="1"/>
</dbReference>
<dbReference type="PANTHER" id="PTHR15696">
    <property type="entry name" value="SMG-7 SUPPRESSOR WITH MORPHOLOGICAL EFFECT ON GENITALIA PROTEIN 7"/>
    <property type="match status" value="1"/>
</dbReference>
<dbReference type="Pfam" id="PF10374">
    <property type="entry name" value="EST1"/>
    <property type="match status" value="1"/>
</dbReference>
<dbReference type="Pfam" id="PF10373">
    <property type="entry name" value="EST1_DNA_bind"/>
    <property type="match status" value="1"/>
</dbReference>
<dbReference type="SUPFAM" id="SSF48452">
    <property type="entry name" value="TPR-like"/>
    <property type="match status" value="1"/>
</dbReference>
<protein>
    <recommendedName>
        <fullName>Protein EBS1</fullName>
    </recommendedName>
</protein>
<organism>
    <name type="scientific">Eremothecium gossypii (strain ATCC 10895 / CBS 109.51 / FGSC 9923 / NRRL Y-1056)</name>
    <name type="common">Yeast</name>
    <name type="synonym">Ashbya gossypii</name>
    <dbReference type="NCBI Taxonomy" id="284811"/>
    <lineage>
        <taxon>Eukaryota</taxon>
        <taxon>Fungi</taxon>
        <taxon>Dikarya</taxon>
        <taxon>Ascomycota</taxon>
        <taxon>Saccharomycotina</taxon>
        <taxon>Saccharomycetes</taxon>
        <taxon>Saccharomycetales</taxon>
        <taxon>Saccharomycetaceae</taxon>
        <taxon>Eremothecium</taxon>
    </lineage>
</organism>
<gene>
    <name type="primary">EBS1</name>
    <name type="ordered locus">AGL100W</name>
</gene>
<feature type="chain" id="PRO_0000086906" description="Protein EBS1">
    <location>
        <begin position="1"/>
        <end position="775"/>
    </location>
</feature>
<feature type="region of interest" description="Disordered" evidence="2">
    <location>
        <begin position="550"/>
        <end position="597"/>
    </location>
</feature>
<feature type="compositionally biased region" description="Basic residues" evidence="2">
    <location>
        <begin position="579"/>
        <end position="590"/>
    </location>
</feature>
<reference key="1">
    <citation type="journal article" date="2004" name="Science">
        <title>The Ashbya gossypii genome as a tool for mapping the ancient Saccharomyces cerevisiae genome.</title>
        <authorList>
            <person name="Dietrich F.S."/>
            <person name="Voegeli S."/>
            <person name="Brachat S."/>
            <person name="Lerch A."/>
            <person name="Gates K."/>
            <person name="Steiner S."/>
            <person name="Mohr C."/>
            <person name="Poehlmann R."/>
            <person name="Luedi P."/>
            <person name="Choi S."/>
            <person name="Wing R.A."/>
            <person name="Flavier A."/>
            <person name="Gaffney T.D."/>
            <person name="Philippsen P."/>
        </authorList>
    </citation>
    <scope>NUCLEOTIDE SEQUENCE [LARGE SCALE GENOMIC DNA]</scope>
    <source>
        <strain>ATCC 10895 / CBS 109.51 / FGSC 9923 / NRRL Y-1056</strain>
    </source>
</reference>
<reference key="2">
    <citation type="journal article" date="2013" name="G3 (Bethesda)">
        <title>Genomes of Ashbya fungi isolated from insects reveal four mating-type loci, numerous translocations, lack of transposons, and distinct gene duplications.</title>
        <authorList>
            <person name="Dietrich F.S."/>
            <person name="Voegeli S."/>
            <person name="Kuo S."/>
            <person name="Philippsen P."/>
        </authorList>
    </citation>
    <scope>GENOME REANNOTATION</scope>
    <source>
        <strain>ATCC 10895 / CBS 109.51 / FGSC 9923 / NRRL Y-1056</strain>
    </source>
</reference>
<sequence>MTLTPMEDKGIIPNFNDFKRQLAELLQSRSTVEDITLLQGFLQLVHSKTQQWRGAEGLPATPDLLDAVWKEIHYPIFKWFQQWRAHLLEAAEGGPQERTYISFRRMNGKLNKIFKIIRQFYNGLVQQLFDRYDFGKLLPAGVIRELNVQSGGELQTLDDSSYFTILCVMSLQRCLLYLGCCHRYKCCCSKLSKRFHISDFDDSMRYFMLAKQIVPSVGETYLQEGLVYVQTGNYGHAAYAFMRGSLSRMPTDAGIPNLESIVADASSGLFAKHQGILKRLRSKESDSNKLINREVLEFYFLALFSSVYAPESWSKQGSDIRHCTEILFEKVRSRYARNVRLILQDVLLFIGGFDLVIKKAKAMGLNRSDTLPSNCTAFLETAFDFFSHVIDSVVLKEWQSFDTWEYLALVRVICVWIKSHSIVTQFAHRHTQFCQSVAHLLNNILAHTEYQQLMDVEHRPKRDYFFQEDIMLKDFSAIGHTLSDFNDVDLFQMENLPDRLAGLVDDKLTAKEEGLLKLHAIVFIGKKFLANNDVNIVWCDESKRFNSLKPDVPLRTCSPPKAKTPPPSTSDYTPAGAKQTKKSKPKRNSRRVQSLSSLEAKLMERKGLRQSVAEGRVYSGCSVPAAPMSFDVAPSAHLYQDRAAGTSATQEAATYYNQGYNGPMQLGSTEILNSRSPSGNNRIAFHPSHQAYMQMIQTPQPQAWPTAYGHNAYYSQPTQHPYPMSSQLAQFQNGPIPFVAGPYAMYMPPPGPGMVVLNNGHPMIPNESPPQQHYP</sequence>
<comment type="function">
    <text evidence="1">Involved in telomere maintenance.</text>
</comment>
<comment type="subcellular location">
    <subcellularLocation>
        <location evidence="3">Nucleus</location>
    </subcellularLocation>
    <subcellularLocation>
        <location evidence="3">Chromosome</location>
        <location evidence="3">Telomere</location>
    </subcellularLocation>
</comment>
<comment type="similarity">
    <text evidence="3">Belongs to the EST1 family.</text>
</comment>
<accession>Q751B2</accession>
<proteinExistence type="inferred from homology"/>
<keyword id="KW-0158">Chromosome</keyword>
<keyword id="KW-0539">Nucleus</keyword>
<keyword id="KW-1185">Reference proteome</keyword>
<keyword id="KW-0779">Telomere</keyword>
<evidence type="ECO:0000250" key="1"/>
<evidence type="ECO:0000256" key="2">
    <source>
        <dbReference type="SAM" id="MobiDB-lite"/>
    </source>
</evidence>
<evidence type="ECO:0000305" key="3"/>